<organism>
    <name type="scientific">Bacillus subtilis (strain 168)</name>
    <dbReference type="NCBI Taxonomy" id="224308"/>
    <lineage>
        <taxon>Bacteria</taxon>
        <taxon>Bacillati</taxon>
        <taxon>Bacillota</taxon>
        <taxon>Bacilli</taxon>
        <taxon>Bacillales</taxon>
        <taxon>Bacillaceae</taxon>
        <taxon>Bacillus</taxon>
    </lineage>
</organism>
<accession>P54946</accession>
<protein>
    <recommendedName>
        <fullName>Uncharacterized protein YxeG</fullName>
    </recommendedName>
</protein>
<gene>
    <name type="primary">yxeG</name>
    <name type="synonym">IP1A</name>
    <name type="ordered locus">BSU39560</name>
</gene>
<keyword id="KW-1003">Cell membrane</keyword>
<keyword id="KW-0472">Membrane</keyword>
<keyword id="KW-1185">Reference proteome</keyword>
<keyword id="KW-0812">Transmembrane</keyword>
<keyword id="KW-1133">Transmembrane helix</keyword>
<sequence>MRNQKAERLVAAGLVLHIIQWIFILWAFLKVKHLFSDYTIYNPNVISGSMQSLSFIQMMRAMMYSGAIVNYVLFFALVLLIYGIVLHAILIVLEMAAYVMIRRNPSSSWGFFFIAAGVKLAILNITGIPFLAAGFLLMKQKKAENGVKAERKRKPRLRIRRQGRRLNRIRRKPSLPVEYQKEKTI</sequence>
<proteinExistence type="predicted"/>
<reference key="1">
    <citation type="journal article" date="1995" name="DNA Res.">
        <title>Cloning and sequencing of a 23-kb region of the Bacillus subtilis genome between the iol and hut operons.</title>
        <authorList>
            <person name="Yoshida K."/>
            <person name="Fujimyra M."/>
            <person name="Yanai N."/>
            <person name="Fujita Y."/>
        </authorList>
    </citation>
    <scope>NUCLEOTIDE SEQUENCE [GENOMIC DNA]</scope>
    <source>
        <strain>168 / BGSC1A1</strain>
    </source>
</reference>
<reference key="2">
    <citation type="journal article" date="1997" name="Nature">
        <title>The complete genome sequence of the Gram-positive bacterium Bacillus subtilis.</title>
        <authorList>
            <person name="Kunst F."/>
            <person name="Ogasawara N."/>
            <person name="Moszer I."/>
            <person name="Albertini A.M."/>
            <person name="Alloni G."/>
            <person name="Azevedo V."/>
            <person name="Bertero M.G."/>
            <person name="Bessieres P."/>
            <person name="Bolotin A."/>
            <person name="Borchert S."/>
            <person name="Borriss R."/>
            <person name="Boursier L."/>
            <person name="Brans A."/>
            <person name="Braun M."/>
            <person name="Brignell S.C."/>
            <person name="Bron S."/>
            <person name="Brouillet S."/>
            <person name="Bruschi C.V."/>
            <person name="Caldwell B."/>
            <person name="Capuano V."/>
            <person name="Carter N.M."/>
            <person name="Choi S.-K."/>
            <person name="Codani J.-J."/>
            <person name="Connerton I.F."/>
            <person name="Cummings N.J."/>
            <person name="Daniel R.A."/>
            <person name="Denizot F."/>
            <person name="Devine K.M."/>
            <person name="Duesterhoeft A."/>
            <person name="Ehrlich S.D."/>
            <person name="Emmerson P.T."/>
            <person name="Entian K.-D."/>
            <person name="Errington J."/>
            <person name="Fabret C."/>
            <person name="Ferrari E."/>
            <person name="Foulger D."/>
            <person name="Fritz C."/>
            <person name="Fujita M."/>
            <person name="Fujita Y."/>
            <person name="Fuma S."/>
            <person name="Galizzi A."/>
            <person name="Galleron N."/>
            <person name="Ghim S.-Y."/>
            <person name="Glaser P."/>
            <person name="Goffeau A."/>
            <person name="Golightly E.J."/>
            <person name="Grandi G."/>
            <person name="Guiseppi G."/>
            <person name="Guy B.J."/>
            <person name="Haga K."/>
            <person name="Haiech J."/>
            <person name="Harwood C.R."/>
            <person name="Henaut A."/>
            <person name="Hilbert H."/>
            <person name="Holsappel S."/>
            <person name="Hosono S."/>
            <person name="Hullo M.-F."/>
            <person name="Itaya M."/>
            <person name="Jones L.-M."/>
            <person name="Joris B."/>
            <person name="Karamata D."/>
            <person name="Kasahara Y."/>
            <person name="Klaerr-Blanchard M."/>
            <person name="Klein C."/>
            <person name="Kobayashi Y."/>
            <person name="Koetter P."/>
            <person name="Koningstein G."/>
            <person name="Krogh S."/>
            <person name="Kumano M."/>
            <person name="Kurita K."/>
            <person name="Lapidus A."/>
            <person name="Lardinois S."/>
            <person name="Lauber J."/>
            <person name="Lazarevic V."/>
            <person name="Lee S.-M."/>
            <person name="Levine A."/>
            <person name="Liu H."/>
            <person name="Masuda S."/>
            <person name="Mauel C."/>
            <person name="Medigue C."/>
            <person name="Medina N."/>
            <person name="Mellado R.P."/>
            <person name="Mizuno M."/>
            <person name="Moestl D."/>
            <person name="Nakai S."/>
            <person name="Noback M."/>
            <person name="Noone D."/>
            <person name="O'Reilly M."/>
            <person name="Ogawa K."/>
            <person name="Ogiwara A."/>
            <person name="Oudega B."/>
            <person name="Park S.-H."/>
            <person name="Parro V."/>
            <person name="Pohl T.M."/>
            <person name="Portetelle D."/>
            <person name="Porwollik S."/>
            <person name="Prescott A.M."/>
            <person name="Presecan E."/>
            <person name="Pujic P."/>
            <person name="Purnelle B."/>
            <person name="Rapoport G."/>
            <person name="Rey M."/>
            <person name="Reynolds S."/>
            <person name="Rieger M."/>
            <person name="Rivolta C."/>
            <person name="Rocha E."/>
            <person name="Roche B."/>
            <person name="Rose M."/>
            <person name="Sadaie Y."/>
            <person name="Sato T."/>
            <person name="Scanlan E."/>
            <person name="Schleich S."/>
            <person name="Schroeter R."/>
            <person name="Scoffone F."/>
            <person name="Sekiguchi J."/>
            <person name="Sekowska A."/>
            <person name="Seror S.J."/>
            <person name="Serror P."/>
            <person name="Shin B.-S."/>
            <person name="Soldo B."/>
            <person name="Sorokin A."/>
            <person name="Tacconi E."/>
            <person name="Takagi T."/>
            <person name="Takahashi H."/>
            <person name="Takemaru K."/>
            <person name="Takeuchi M."/>
            <person name="Tamakoshi A."/>
            <person name="Tanaka T."/>
            <person name="Terpstra P."/>
            <person name="Tognoni A."/>
            <person name="Tosato V."/>
            <person name="Uchiyama S."/>
            <person name="Vandenbol M."/>
            <person name="Vannier F."/>
            <person name="Vassarotti A."/>
            <person name="Viari A."/>
            <person name="Wambutt R."/>
            <person name="Wedler E."/>
            <person name="Wedler H."/>
            <person name="Weitzenegger T."/>
            <person name="Winters P."/>
            <person name="Wipat A."/>
            <person name="Yamamoto H."/>
            <person name="Yamane K."/>
            <person name="Yasumoto K."/>
            <person name="Yata K."/>
            <person name="Yoshida K."/>
            <person name="Yoshikawa H.-F."/>
            <person name="Zumstein E."/>
            <person name="Yoshikawa H."/>
            <person name="Danchin A."/>
        </authorList>
    </citation>
    <scope>NUCLEOTIDE SEQUENCE [LARGE SCALE GENOMIC DNA]</scope>
    <source>
        <strain>168</strain>
    </source>
</reference>
<name>YXEG_BACSU</name>
<dbReference type="EMBL" id="D45912">
    <property type="protein sequence ID" value="BAA08323.1"/>
    <property type="molecule type" value="Genomic_DNA"/>
</dbReference>
<dbReference type="EMBL" id="AL009126">
    <property type="protein sequence ID" value="CAB15992.1"/>
    <property type="molecule type" value="Genomic_DNA"/>
</dbReference>
<dbReference type="PIR" id="A70075">
    <property type="entry name" value="A70075"/>
</dbReference>
<dbReference type="RefSeq" id="NP_391835.1">
    <property type="nucleotide sequence ID" value="NC_000964.3"/>
</dbReference>
<dbReference type="RefSeq" id="WP_003242636.1">
    <property type="nucleotide sequence ID" value="NZ_OZ025638.1"/>
</dbReference>
<dbReference type="SMR" id="P54946"/>
<dbReference type="FunCoup" id="P54946">
    <property type="interactions" value="154"/>
</dbReference>
<dbReference type="STRING" id="224308.BSU39560"/>
<dbReference type="PaxDb" id="224308-BSU39560"/>
<dbReference type="EnsemblBacteria" id="CAB15992">
    <property type="protein sequence ID" value="CAB15992"/>
    <property type="gene ID" value="BSU_39560"/>
</dbReference>
<dbReference type="GeneID" id="937586"/>
<dbReference type="KEGG" id="bsu:BSU39560"/>
<dbReference type="PATRIC" id="fig|224308.179.peg.4281"/>
<dbReference type="InParanoid" id="P54946"/>
<dbReference type="OrthoDB" id="2929294at2"/>
<dbReference type="BioCyc" id="BSUB:BSU39560-MONOMER"/>
<dbReference type="Proteomes" id="UP000001570">
    <property type="component" value="Chromosome"/>
</dbReference>
<dbReference type="GO" id="GO:0005886">
    <property type="term" value="C:plasma membrane"/>
    <property type="evidence" value="ECO:0007669"/>
    <property type="project" value="UniProtKB-SubCell"/>
</dbReference>
<evidence type="ECO:0000255" key="1"/>
<evidence type="ECO:0000305" key="2"/>
<feature type="chain" id="PRO_0000050015" description="Uncharacterized protein YxeG">
    <location>
        <begin position="1"/>
        <end position="185"/>
    </location>
</feature>
<feature type="transmembrane region" description="Helical" evidence="1">
    <location>
        <begin position="9"/>
        <end position="29"/>
    </location>
</feature>
<feature type="transmembrane region" description="Helical" evidence="1">
    <location>
        <begin position="72"/>
        <end position="92"/>
    </location>
</feature>
<feature type="transmembrane region" description="Helical" evidence="1">
    <location>
        <begin position="111"/>
        <end position="131"/>
    </location>
</feature>
<comment type="subcellular location">
    <subcellularLocation>
        <location evidence="2">Cell membrane</location>
        <topology evidence="2">Multi-pass membrane protein</topology>
    </subcellularLocation>
</comment>